<name>LEPA_BURM1</name>
<evidence type="ECO:0000255" key="1">
    <source>
        <dbReference type="HAMAP-Rule" id="MF_00071"/>
    </source>
</evidence>
<comment type="function">
    <text evidence="1">Required for accurate and efficient protein synthesis under certain stress conditions. May act as a fidelity factor of the translation reaction, by catalyzing a one-codon backward translocation of tRNAs on improperly translocated ribosomes. Back-translocation proceeds from a post-translocation (POST) complex to a pre-translocation (PRE) complex, thus giving elongation factor G a second chance to translocate the tRNAs correctly. Binds to ribosomes in a GTP-dependent manner.</text>
</comment>
<comment type="catalytic activity">
    <reaction evidence="1">
        <text>GTP + H2O = GDP + phosphate + H(+)</text>
        <dbReference type="Rhea" id="RHEA:19669"/>
        <dbReference type="ChEBI" id="CHEBI:15377"/>
        <dbReference type="ChEBI" id="CHEBI:15378"/>
        <dbReference type="ChEBI" id="CHEBI:37565"/>
        <dbReference type="ChEBI" id="CHEBI:43474"/>
        <dbReference type="ChEBI" id="CHEBI:58189"/>
        <dbReference type="EC" id="3.6.5.n1"/>
    </reaction>
</comment>
<comment type="subcellular location">
    <subcellularLocation>
        <location evidence="1">Cell inner membrane</location>
        <topology evidence="1">Peripheral membrane protein</topology>
        <orientation evidence="1">Cytoplasmic side</orientation>
    </subcellularLocation>
</comment>
<comment type="similarity">
    <text evidence="1">Belongs to the TRAFAC class translation factor GTPase superfamily. Classic translation factor GTPase family. LepA subfamily.</text>
</comment>
<organism>
    <name type="scientific">Burkholderia multivorans (strain ATCC 17616 / 249)</name>
    <dbReference type="NCBI Taxonomy" id="395019"/>
    <lineage>
        <taxon>Bacteria</taxon>
        <taxon>Pseudomonadati</taxon>
        <taxon>Pseudomonadota</taxon>
        <taxon>Betaproteobacteria</taxon>
        <taxon>Burkholderiales</taxon>
        <taxon>Burkholderiaceae</taxon>
        <taxon>Burkholderia</taxon>
        <taxon>Burkholderia cepacia complex</taxon>
    </lineage>
</organism>
<feature type="chain" id="PRO_1000092378" description="Elongation factor 4">
    <location>
        <begin position="1"/>
        <end position="597"/>
    </location>
</feature>
<feature type="domain" description="tr-type G">
    <location>
        <begin position="2"/>
        <end position="184"/>
    </location>
</feature>
<feature type="binding site" evidence="1">
    <location>
        <begin position="14"/>
        <end position="19"/>
    </location>
    <ligand>
        <name>GTP</name>
        <dbReference type="ChEBI" id="CHEBI:37565"/>
    </ligand>
</feature>
<feature type="binding site" evidence="1">
    <location>
        <begin position="131"/>
        <end position="134"/>
    </location>
    <ligand>
        <name>GTP</name>
        <dbReference type="ChEBI" id="CHEBI:37565"/>
    </ligand>
</feature>
<accession>A9ADE0</accession>
<keyword id="KW-0997">Cell inner membrane</keyword>
<keyword id="KW-1003">Cell membrane</keyword>
<keyword id="KW-0342">GTP-binding</keyword>
<keyword id="KW-0378">Hydrolase</keyword>
<keyword id="KW-0472">Membrane</keyword>
<keyword id="KW-0547">Nucleotide-binding</keyword>
<keyword id="KW-0648">Protein biosynthesis</keyword>
<keyword id="KW-1185">Reference proteome</keyword>
<sequence>MDHIRNFSIIAHIDHGKSTLADRIIQVCGGLADREMEAQVLDSMDIERERGITIKAQTAALSYRARDGKVYNLNLIDTPGHVDFSYEVSRSLSACEGALLVVDASQGVEAQTVANCYTAIELGVEVVPVLNKIDLPAANPENAIAEIEDVIGIDASDATRCSAKTGLGVEDVLEALIAKVPPPKGDPAAPLQALIIDSWFDNYVGVVMLVRIVNGTLRPKDKIKLMATGAQYPVEHIGVFTPKSRNLESLSAGQVGFIIAGIKELTAAKVGDTVTHATKAAAEPLPGFKEVKPQVFAGLYPVEANQYDALRESLEKLKLNDASLQYEPEVSQALGFGFRCGFLGLLHMEIVQERLEREFDMDLITTAPTVVYEVVQSDGSTIMVENPAKMPEPARIAEIREPIVTVNLYMPQDYVGSVITLCEQKRGSQINMQYHGRQVQLTYEIPMAEIVLDFFDRLKSVSRGYASMDYEFKEYRSSDVVKVDMLINGDKVDALSIIVHRSQSQYRGREVAAKMREIIPRQMYDVAIQAAIGAHIIARENIKALRKNVLAKCYGGDITRKKKLLEKQKEGKKRMKQVGSVEIPQEAFLAILRVEDK</sequence>
<protein>
    <recommendedName>
        <fullName evidence="1">Elongation factor 4</fullName>
        <shortName evidence="1">EF-4</shortName>
        <ecNumber evidence="1">3.6.5.n1</ecNumber>
    </recommendedName>
    <alternativeName>
        <fullName evidence="1">Ribosomal back-translocase LepA</fullName>
    </alternativeName>
</protein>
<proteinExistence type="inferred from homology"/>
<dbReference type="EC" id="3.6.5.n1" evidence="1"/>
<dbReference type="EMBL" id="CP000868">
    <property type="protein sequence ID" value="ABX15857.1"/>
    <property type="molecule type" value="Genomic_DNA"/>
</dbReference>
<dbReference type="EMBL" id="AP009385">
    <property type="protein sequence ID" value="BAG43013.1"/>
    <property type="molecule type" value="Genomic_DNA"/>
</dbReference>
<dbReference type="RefSeq" id="WP_006401262.1">
    <property type="nucleotide sequence ID" value="NC_010804.1"/>
</dbReference>
<dbReference type="SMR" id="A9ADE0"/>
<dbReference type="STRING" id="395019.BMULJ_01069"/>
<dbReference type="GeneID" id="89569429"/>
<dbReference type="KEGG" id="bmj:BMULJ_01069"/>
<dbReference type="KEGG" id="bmu:Bmul_2172"/>
<dbReference type="eggNOG" id="COG0481">
    <property type="taxonomic scope" value="Bacteria"/>
</dbReference>
<dbReference type="HOGENOM" id="CLU_009995_3_3_4"/>
<dbReference type="Proteomes" id="UP000008815">
    <property type="component" value="Chromosome 1"/>
</dbReference>
<dbReference type="GO" id="GO:0005886">
    <property type="term" value="C:plasma membrane"/>
    <property type="evidence" value="ECO:0007669"/>
    <property type="project" value="UniProtKB-SubCell"/>
</dbReference>
<dbReference type="GO" id="GO:0005525">
    <property type="term" value="F:GTP binding"/>
    <property type="evidence" value="ECO:0007669"/>
    <property type="project" value="UniProtKB-UniRule"/>
</dbReference>
<dbReference type="GO" id="GO:0003924">
    <property type="term" value="F:GTPase activity"/>
    <property type="evidence" value="ECO:0007669"/>
    <property type="project" value="UniProtKB-UniRule"/>
</dbReference>
<dbReference type="GO" id="GO:0097216">
    <property type="term" value="F:guanosine tetraphosphate binding"/>
    <property type="evidence" value="ECO:0007669"/>
    <property type="project" value="UniProtKB-ARBA"/>
</dbReference>
<dbReference type="GO" id="GO:0043022">
    <property type="term" value="F:ribosome binding"/>
    <property type="evidence" value="ECO:0007669"/>
    <property type="project" value="UniProtKB-UniRule"/>
</dbReference>
<dbReference type="GO" id="GO:0003746">
    <property type="term" value="F:translation elongation factor activity"/>
    <property type="evidence" value="ECO:0007669"/>
    <property type="project" value="UniProtKB-UniRule"/>
</dbReference>
<dbReference type="GO" id="GO:0045727">
    <property type="term" value="P:positive regulation of translation"/>
    <property type="evidence" value="ECO:0007669"/>
    <property type="project" value="UniProtKB-UniRule"/>
</dbReference>
<dbReference type="CDD" id="cd03699">
    <property type="entry name" value="EF4_II"/>
    <property type="match status" value="1"/>
</dbReference>
<dbReference type="CDD" id="cd16260">
    <property type="entry name" value="EF4_III"/>
    <property type="match status" value="1"/>
</dbReference>
<dbReference type="CDD" id="cd01890">
    <property type="entry name" value="LepA"/>
    <property type="match status" value="1"/>
</dbReference>
<dbReference type="CDD" id="cd03709">
    <property type="entry name" value="lepA_C"/>
    <property type="match status" value="1"/>
</dbReference>
<dbReference type="FunFam" id="3.40.50.300:FF:000078">
    <property type="entry name" value="Elongation factor 4"/>
    <property type="match status" value="1"/>
</dbReference>
<dbReference type="FunFam" id="2.40.30.10:FF:000015">
    <property type="entry name" value="Translation factor GUF1, mitochondrial"/>
    <property type="match status" value="1"/>
</dbReference>
<dbReference type="FunFam" id="3.30.70.240:FF:000007">
    <property type="entry name" value="Translation factor GUF1, mitochondrial"/>
    <property type="match status" value="1"/>
</dbReference>
<dbReference type="FunFam" id="3.30.70.2570:FF:000001">
    <property type="entry name" value="Translation factor GUF1, mitochondrial"/>
    <property type="match status" value="1"/>
</dbReference>
<dbReference type="FunFam" id="3.30.70.870:FF:000004">
    <property type="entry name" value="Translation factor GUF1, mitochondrial"/>
    <property type="match status" value="1"/>
</dbReference>
<dbReference type="Gene3D" id="3.30.70.240">
    <property type="match status" value="1"/>
</dbReference>
<dbReference type="Gene3D" id="3.30.70.2570">
    <property type="entry name" value="Elongation factor 4, C-terminal domain"/>
    <property type="match status" value="1"/>
</dbReference>
<dbReference type="Gene3D" id="3.30.70.870">
    <property type="entry name" value="Elongation Factor G (Translational Gtpase), domain 3"/>
    <property type="match status" value="1"/>
</dbReference>
<dbReference type="Gene3D" id="3.40.50.300">
    <property type="entry name" value="P-loop containing nucleotide triphosphate hydrolases"/>
    <property type="match status" value="1"/>
</dbReference>
<dbReference type="Gene3D" id="2.40.30.10">
    <property type="entry name" value="Translation factors"/>
    <property type="match status" value="1"/>
</dbReference>
<dbReference type="HAMAP" id="MF_00071">
    <property type="entry name" value="LepA"/>
    <property type="match status" value="1"/>
</dbReference>
<dbReference type="InterPro" id="IPR006297">
    <property type="entry name" value="EF-4"/>
</dbReference>
<dbReference type="InterPro" id="IPR035647">
    <property type="entry name" value="EFG_III/V"/>
</dbReference>
<dbReference type="InterPro" id="IPR000640">
    <property type="entry name" value="EFG_V-like"/>
</dbReference>
<dbReference type="InterPro" id="IPR004161">
    <property type="entry name" value="EFTu-like_2"/>
</dbReference>
<dbReference type="InterPro" id="IPR031157">
    <property type="entry name" value="G_TR_CS"/>
</dbReference>
<dbReference type="InterPro" id="IPR038363">
    <property type="entry name" value="LepA_C_sf"/>
</dbReference>
<dbReference type="InterPro" id="IPR013842">
    <property type="entry name" value="LepA_CTD"/>
</dbReference>
<dbReference type="InterPro" id="IPR035654">
    <property type="entry name" value="LepA_IV"/>
</dbReference>
<dbReference type="InterPro" id="IPR027417">
    <property type="entry name" value="P-loop_NTPase"/>
</dbReference>
<dbReference type="InterPro" id="IPR005225">
    <property type="entry name" value="Small_GTP-bd"/>
</dbReference>
<dbReference type="InterPro" id="IPR000795">
    <property type="entry name" value="T_Tr_GTP-bd_dom"/>
</dbReference>
<dbReference type="InterPro" id="IPR009000">
    <property type="entry name" value="Transl_B-barrel_sf"/>
</dbReference>
<dbReference type="NCBIfam" id="TIGR01393">
    <property type="entry name" value="lepA"/>
    <property type="match status" value="1"/>
</dbReference>
<dbReference type="NCBIfam" id="TIGR00231">
    <property type="entry name" value="small_GTP"/>
    <property type="match status" value="1"/>
</dbReference>
<dbReference type="PANTHER" id="PTHR43512:SF4">
    <property type="entry name" value="TRANSLATION FACTOR GUF1 HOMOLOG, CHLOROPLASTIC"/>
    <property type="match status" value="1"/>
</dbReference>
<dbReference type="PANTHER" id="PTHR43512">
    <property type="entry name" value="TRANSLATION FACTOR GUF1-RELATED"/>
    <property type="match status" value="1"/>
</dbReference>
<dbReference type="Pfam" id="PF00679">
    <property type="entry name" value="EFG_C"/>
    <property type="match status" value="1"/>
</dbReference>
<dbReference type="Pfam" id="PF00009">
    <property type="entry name" value="GTP_EFTU"/>
    <property type="match status" value="1"/>
</dbReference>
<dbReference type="Pfam" id="PF03144">
    <property type="entry name" value="GTP_EFTU_D2"/>
    <property type="match status" value="1"/>
</dbReference>
<dbReference type="Pfam" id="PF06421">
    <property type="entry name" value="LepA_C"/>
    <property type="match status" value="1"/>
</dbReference>
<dbReference type="PRINTS" id="PR00315">
    <property type="entry name" value="ELONGATNFCT"/>
</dbReference>
<dbReference type="SMART" id="SM00838">
    <property type="entry name" value="EFG_C"/>
    <property type="match status" value="1"/>
</dbReference>
<dbReference type="SUPFAM" id="SSF54980">
    <property type="entry name" value="EF-G C-terminal domain-like"/>
    <property type="match status" value="2"/>
</dbReference>
<dbReference type="SUPFAM" id="SSF52540">
    <property type="entry name" value="P-loop containing nucleoside triphosphate hydrolases"/>
    <property type="match status" value="1"/>
</dbReference>
<dbReference type="SUPFAM" id="SSF50447">
    <property type="entry name" value="Translation proteins"/>
    <property type="match status" value="1"/>
</dbReference>
<dbReference type="PROSITE" id="PS00301">
    <property type="entry name" value="G_TR_1"/>
    <property type="match status" value="1"/>
</dbReference>
<dbReference type="PROSITE" id="PS51722">
    <property type="entry name" value="G_TR_2"/>
    <property type="match status" value="1"/>
</dbReference>
<gene>
    <name evidence="1" type="primary">lepA</name>
    <name type="ordered locus">Bmul_2172</name>
    <name type="ordered locus">BMULJ_01069</name>
</gene>
<reference key="1">
    <citation type="submission" date="2007-10" db="EMBL/GenBank/DDBJ databases">
        <title>Complete sequence of chromosome 1 of Burkholderia multivorans ATCC 17616.</title>
        <authorList>
            <person name="Copeland A."/>
            <person name="Lucas S."/>
            <person name="Lapidus A."/>
            <person name="Barry K."/>
            <person name="Glavina del Rio T."/>
            <person name="Dalin E."/>
            <person name="Tice H."/>
            <person name="Pitluck S."/>
            <person name="Chain P."/>
            <person name="Malfatti S."/>
            <person name="Shin M."/>
            <person name="Vergez L."/>
            <person name="Schmutz J."/>
            <person name="Larimer F."/>
            <person name="Land M."/>
            <person name="Hauser L."/>
            <person name="Kyrpides N."/>
            <person name="Kim E."/>
            <person name="Tiedje J."/>
            <person name="Richardson P."/>
        </authorList>
    </citation>
    <scope>NUCLEOTIDE SEQUENCE [LARGE SCALE GENOMIC DNA]</scope>
    <source>
        <strain>ATCC 17616 / 249</strain>
    </source>
</reference>
<reference key="2">
    <citation type="submission" date="2007-04" db="EMBL/GenBank/DDBJ databases">
        <title>Complete genome sequence of Burkholderia multivorans ATCC 17616.</title>
        <authorList>
            <person name="Ohtsubo Y."/>
            <person name="Yamashita A."/>
            <person name="Kurokawa K."/>
            <person name="Takami H."/>
            <person name="Yuhara S."/>
            <person name="Nishiyama E."/>
            <person name="Endo R."/>
            <person name="Miyazaki R."/>
            <person name="Ono A."/>
            <person name="Yano K."/>
            <person name="Ito M."/>
            <person name="Sota M."/>
            <person name="Yuji N."/>
            <person name="Hattori M."/>
            <person name="Tsuda M."/>
        </authorList>
    </citation>
    <scope>NUCLEOTIDE SEQUENCE [LARGE SCALE GENOMIC DNA]</scope>
    <source>
        <strain>ATCC 17616 / 249</strain>
    </source>
</reference>